<keyword id="KW-1185">Reference proteome</keyword>
<keyword id="KW-0687">Ribonucleoprotein</keyword>
<keyword id="KW-0689">Ribosomal protein</keyword>
<keyword id="KW-0694">RNA-binding</keyword>
<keyword id="KW-0699">rRNA-binding</keyword>
<comment type="function">
    <text evidence="1">This is one of the proteins that bind and probably mediate the attachment of the 5S RNA into the large ribosomal subunit, where it forms part of the central protuberance.</text>
</comment>
<comment type="subunit">
    <text evidence="1">Part of the 50S ribosomal subunit; part of the 5S rRNA/L5/L18/L25 subcomplex. Contacts the 5S and 23S rRNAs.</text>
</comment>
<comment type="similarity">
    <text evidence="1">Belongs to the universal ribosomal protein uL18 family.</text>
</comment>
<dbReference type="EMBL" id="AE005176">
    <property type="protein sequence ID" value="AAK06180.1"/>
    <property type="molecule type" value="Genomic_DNA"/>
</dbReference>
<dbReference type="PIR" id="B86885">
    <property type="entry name" value="B86885"/>
</dbReference>
<dbReference type="RefSeq" id="NP_268239.1">
    <property type="nucleotide sequence ID" value="NC_002662.1"/>
</dbReference>
<dbReference type="RefSeq" id="WP_003129924.1">
    <property type="nucleotide sequence ID" value="NC_002662.1"/>
</dbReference>
<dbReference type="SMR" id="Q9CDX9"/>
<dbReference type="PaxDb" id="272623-L0414"/>
<dbReference type="EnsemblBacteria" id="AAK06180">
    <property type="protein sequence ID" value="AAK06180"/>
    <property type="gene ID" value="L0414"/>
</dbReference>
<dbReference type="GeneID" id="89634430"/>
<dbReference type="KEGG" id="lla:L0414"/>
<dbReference type="PATRIC" id="fig|272623.7.peg.2241"/>
<dbReference type="eggNOG" id="COG0256">
    <property type="taxonomic scope" value="Bacteria"/>
</dbReference>
<dbReference type="HOGENOM" id="CLU_098841_0_1_9"/>
<dbReference type="OrthoDB" id="9810939at2"/>
<dbReference type="Proteomes" id="UP000002196">
    <property type="component" value="Chromosome"/>
</dbReference>
<dbReference type="GO" id="GO:0022625">
    <property type="term" value="C:cytosolic large ribosomal subunit"/>
    <property type="evidence" value="ECO:0007669"/>
    <property type="project" value="TreeGrafter"/>
</dbReference>
<dbReference type="GO" id="GO:0008097">
    <property type="term" value="F:5S rRNA binding"/>
    <property type="evidence" value="ECO:0007669"/>
    <property type="project" value="TreeGrafter"/>
</dbReference>
<dbReference type="GO" id="GO:0003735">
    <property type="term" value="F:structural constituent of ribosome"/>
    <property type="evidence" value="ECO:0007669"/>
    <property type="project" value="InterPro"/>
</dbReference>
<dbReference type="GO" id="GO:0006412">
    <property type="term" value="P:translation"/>
    <property type="evidence" value="ECO:0007669"/>
    <property type="project" value="UniProtKB-UniRule"/>
</dbReference>
<dbReference type="CDD" id="cd00432">
    <property type="entry name" value="Ribosomal_L18_L5e"/>
    <property type="match status" value="1"/>
</dbReference>
<dbReference type="FunFam" id="3.30.420.100:FF:000001">
    <property type="entry name" value="50S ribosomal protein L18"/>
    <property type="match status" value="1"/>
</dbReference>
<dbReference type="Gene3D" id="3.30.420.100">
    <property type="match status" value="1"/>
</dbReference>
<dbReference type="HAMAP" id="MF_01337_B">
    <property type="entry name" value="Ribosomal_uL18_B"/>
    <property type="match status" value="1"/>
</dbReference>
<dbReference type="InterPro" id="IPR004389">
    <property type="entry name" value="Ribosomal_uL18_bac-type"/>
</dbReference>
<dbReference type="InterPro" id="IPR005484">
    <property type="entry name" value="Ribosomal_uL18_bac/euk"/>
</dbReference>
<dbReference type="NCBIfam" id="TIGR00060">
    <property type="entry name" value="L18_bact"/>
    <property type="match status" value="1"/>
</dbReference>
<dbReference type="PANTHER" id="PTHR12899">
    <property type="entry name" value="39S RIBOSOMAL PROTEIN L18, MITOCHONDRIAL"/>
    <property type="match status" value="1"/>
</dbReference>
<dbReference type="PANTHER" id="PTHR12899:SF3">
    <property type="entry name" value="LARGE RIBOSOMAL SUBUNIT PROTEIN UL18M"/>
    <property type="match status" value="1"/>
</dbReference>
<dbReference type="Pfam" id="PF00861">
    <property type="entry name" value="Ribosomal_L18p"/>
    <property type="match status" value="1"/>
</dbReference>
<dbReference type="SUPFAM" id="SSF53137">
    <property type="entry name" value="Translational machinery components"/>
    <property type="match status" value="1"/>
</dbReference>
<sequence length="115" mass="12390">MISKPDKNKLRQKRHTRVRGKISGTSETPRLNVFRSNTNIYAQVIDDVTGTTLASASSLKLTGTKTEQAAEVGKLVAEAAKAKGVEEVVFDRGGYLYHGRVAALATAAREAGLKF</sequence>
<accession>Q9CDX9</accession>
<evidence type="ECO:0000255" key="1">
    <source>
        <dbReference type="HAMAP-Rule" id="MF_01337"/>
    </source>
</evidence>
<evidence type="ECO:0000256" key="2">
    <source>
        <dbReference type="SAM" id="MobiDB-lite"/>
    </source>
</evidence>
<evidence type="ECO:0000305" key="3"/>
<feature type="chain" id="PRO_0000131279" description="Large ribosomal subunit protein uL18">
    <location>
        <begin position="1"/>
        <end position="115"/>
    </location>
</feature>
<feature type="region of interest" description="Disordered" evidence="2">
    <location>
        <begin position="1"/>
        <end position="29"/>
    </location>
</feature>
<feature type="compositionally biased region" description="Basic residues" evidence="2">
    <location>
        <begin position="10"/>
        <end position="20"/>
    </location>
</feature>
<proteinExistence type="inferred from homology"/>
<organism>
    <name type="scientific">Lactococcus lactis subsp. lactis (strain IL1403)</name>
    <name type="common">Streptococcus lactis</name>
    <dbReference type="NCBI Taxonomy" id="272623"/>
    <lineage>
        <taxon>Bacteria</taxon>
        <taxon>Bacillati</taxon>
        <taxon>Bacillota</taxon>
        <taxon>Bacilli</taxon>
        <taxon>Lactobacillales</taxon>
        <taxon>Streptococcaceae</taxon>
        <taxon>Lactococcus</taxon>
    </lineage>
</organism>
<name>RL18_LACLA</name>
<reference key="1">
    <citation type="journal article" date="2001" name="Genome Res.">
        <title>The complete genome sequence of the lactic acid bacterium Lactococcus lactis ssp. lactis IL1403.</title>
        <authorList>
            <person name="Bolotin A."/>
            <person name="Wincker P."/>
            <person name="Mauger S."/>
            <person name="Jaillon O."/>
            <person name="Malarme K."/>
            <person name="Weissenbach J."/>
            <person name="Ehrlich S.D."/>
            <person name="Sorokin A."/>
        </authorList>
    </citation>
    <scope>NUCLEOTIDE SEQUENCE [LARGE SCALE GENOMIC DNA]</scope>
    <source>
        <strain>IL1403</strain>
    </source>
</reference>
<gene>
    <name evidence="1" type="primary">rplR</name>
    <name type="ordered locus">LL2082</name>
    <name type="ORF">L0414</name>
</gene>
<protein>
    <recommendedName>
        <fullName evidence="1">Large ribosomal subunit protein uL18</fullName>
    </recommendedName>
    <alternativeName>
        <fullName evidence="3">50S ribosomal protein L18</fullName>
    </alternativeName>
</protein>